<reference key="1">
    <citation type="submission" date="2006-12" db="EMBL/GenBank/DDBJ databases">
        <title>Bifidobacterium adolescentis complete genome sequence.</title>
        <authorList>
            <person name="Suzuki T."/>
            <person name="Tsuda Y."/>
            <person name="Kanou N."/>
            <person name="Inoue T."/>
            <person name="Kumazaki K."/>
            <person name="Nagano S."/>
            <person name="Hirai S."/>
            <person name="Tanaka K."/>
            <person name="Watanabe K."/>
        </authorList>
    </citation>
    <scope>NUCLEOTIDE SEQUENCE [LARGE SCALE GENOMIC DNA]</scope>
    <source>
        <strain>ATCC 15703 / DSM 20083 / NCTC 11814 / E194a</strain>
    </source>
</reference>
<accession>A1A3W3</accession>
<sequence length="303" mass="32943">MTENVNEHTQGHLLGAADIRRIAADAGISPTKKFGQNFVIDPGTVRRIVREAGVTADDHVLEVGPGLGSLTLAILETGATMTAVEIDPPVAERLPKTIAEFMPDAVDRFRVVNRDALTVNPENLPDFKDDDSFTLVANLPYNVATPILLTLLERFDNLGTFLVMVQKEVADRLSEKPGSKIYGTPSVKLAWYGTAERVGVIGRNVFWPAPNVDSALVLFKRYPGGHTPAADNADGSVVDRETVFRLIDAAFGQRRKTLHAALKKIVPSEAFEKAGIDPTRRGETLTIDEFVALARALDEVFAS</sequence>
<dbReference type="EC" id="2.1.1.182" evidence="1"/>
<dbReference type="EMBL" id="AP009256">
    <property type="protein sequence ID" value="BAF40396.1"/>
    <property type="molecule type" value="Genomic_DNA"/>
</dbReference>
<dbReference type="RefSeq" id="WP_011743906.1">
    <property type="nucleotide sequence ID" value="NC_008618.1"/>
</dbReference>
<dbReference type="SMR" id="A1A3W3"/>
<dbReference type="STRING" id="367928.BAD_1615"/>
<dbReference type="PaxDb" id="1680-BADO_1729"/>
<dbReference type="GeneID" id="4556232"/>
<dbReference type="KEGG" id="bad:BAD_1615"/>
<dbReference type="HOGENOM" id="CLU_041220_1_1_11"/>
<dbReference type="Proteomes" id="UP000008702">
    <property type="component" value="Chromosome"/>
</dbReference>
<dbReference type="GO" id="GO:0005829">
    <property type="term" value="C:cytosol"/>
    <property type="evidence" value="ECO:0007669"/>
    <property type="project" value="TreeGrafter"/>
</dbReference>
<dbReference type="GO" id="GO:0052908">
    <property type="term" value="F:16S rRNA (adenine(1518)-N(6)/adenine(1519)-N(6))-dimethyltransferase activity"/>
    <property type="evidence" value="ECO:0007669"/>
    <property type="project" value="UniProtKB-EC"/>
</dbReference>
<dbReference type="GO" id="GO:0003723">
    <property type="term" value="F:RNA binding"/>
    <property type="evidence" value="ECO:0007669"/>
    <property type="project" value="UniProtKB-KW"/>
</dbReference>
<dbReference type="CDD" id="cd02440">
    <property type="entry name" value="AdoMet_MTases"/>
    <property type="match status" value="1"/>
</dbReference>
<dbReference type="FunFam" id="1.10.8.100:FF:000001">
    <property type="entry name" value="Ribosomal RNA small subunit methyltransferase A"/>
    <property type="match status" value="1"/>
</dbReference>
<dbReference type="FunFam" id="3.40.50.150:FF:000023">
    <property type="entry name" value="Ribosomal RNA small subunit methyltransferase A"/>
    <property type="match status" value="1"/>
</dbReference>
<dbReference type="Gene3D" id="1.10.8.100">
    <property type="entry name" value="Ribosomal RNA adenine dimethylase-like, domain 2"/>
    <property type="match status" value="1"/>
</dbReference>
<dbReference type="Gene3D" id="3.40.50.150">
    <property type="entry name" value="Vaccinia Virus protein VP39"/>
    <property type="match status" value="1"/>
</dbReference>
<dbReference type="HAMAP" id="MF_00607">
    <property type="entry name" value="16SrRNA_methyltr_A"/>
    <property type="match status" value="1"/>
</dbReference>
<dbReference type="InterPro" id="IPR001737">
    <property type="entry name" value="KsgA/Erm"/>
</dbReference>
<dbReference type="InterPro" id="IPR023165">
    <property type="entry name" value="rRNA_Ade_diMease-like_C"/>
</dbReference>
<dbReference type="InterPro" id="IPR020596">
    <property type="entry name" value="rRNA_Ade_Mease_Trfase_CS"/>
</dbReference>
<dbReference type="InterPro" id="IPR020598">
    <property type="entry name" value="rRNA_Ade_methylase_Trfase_N"/>
</dbReference>
<dbReference type="InterPro" id="IPR011530">
    <property type="entry name" value="rRNA_adenine_dimethylase"/>
</dbReference>
<dbReference type="InterPro" id="IPR029063">
    <property type="entry name" value="SAM-dependent_MTases_sf"/>
</dbReference>
<dbReference type="NCBIfam" id="TIGR00755">
    <property type="entry name" value="ksgA"/>
    <property type="match status" value="1"/>
</dbReference>
<dbReference type="PANTHER" id="PTHR11727">
    <property type="entry name" value="DIMETHYLADENOSINE TRANSFERASE"/>
    <property type="match status" value="1"/>
</dbReference>
<dbReference type="PANTHER" id="PTHR11727:SF7">
    <property type="entry name" value="DIMETHYLADENOSINE TRANSFERASE-RELATED"/>
    <property type="match status" value="1"/>
</dbReference>
<dbReference type="Pfam" id="PF00398">
    <property type="entry name" value="RrnaAD"/>
    <property type="match status" value="1"/>
</dbReference>
<dbReference type="SMART" id="SM00650">
    <property type="entry name" value="rADc"/>
    <property type="match status" value="1"/>
</dbReference>
<dbReference type="SUPFAM" id="SSF53335">
    <property type="entry name" value="S-adenosyl-L-methionine-dependent methyltransferases"/>
    <property type="match status" value="1"/>
</dbReference>
<dbReference type="PROSITE" id="PS01131">
    <property type="entry name" value="RRNA_A_DIMETH"/>
    <property type="match status" value="1"/>
</dbReference>
<dbReference type="PROSITE" id="PS51689">
    <property type="entry name" value="SAM_RNA_A_N6_MT"/>
    <property type="match status" value="1"/>
</dbReference>
<protein>
    <recommendedName>
        <fullName evidence="1">Ribosomal RNA small subunit methyltransferase A</fullName>
        <ecNumber evidence="1">2.1.1.182</ecNumber>
    </recommendedName>
    <alternativeName>
        <fullName evidence="1">16S rRNA (adenine(1518)-N(6)/adenine(1519)-N(6))-dimethyltransferase</fullName>
    </alternativeName>
    <alternativeName>
        <fullName evidence="1">16S rRNA dimethyladenosine transferase</fullName>
    </alternativeName>
    <alternativeName>
        <fullName evidence="1">16S rRNA dimethylase</fullName>
    </alternativeName>
    <alternativeName>
        <fullName evidence="1">S-adenosylmethionine-6-N', N'-adenosyl(rRNA) dimethyltransferase</fullName>
    </alternativeName>
</protein>
<proteinExistence type="inferred from homology"/>
<name>RSMA_BIFAA</name>
<organism>
    <name type="scientific">Bifidobacterium adolescentis (strain ATCC 15703 / DSM 20083 / NCTC 11814 / E194a)</name>
    <dbReference type="NCBI Taxonomy" id="367928"/>
    <lineage>
        <taxon>Bacteria</taxon>
        <taxon>Bacillati</taxon>
        <taxon>Actinomycetota</taxon>
        <taxon>Actinomycetes</taxon>
        <taxon>Bifidobacteriales</taxon>
        <taxon>Bifidobacteriaceae</taxon>
        <taxon>Bifidobacterium</taxon>
    </lineage>
</organism>
<gene>
    <name evidence="1" type="primary">rsmA</name>
    <name evidence="1" type="synonym">ksgA</name>
    <name type="ordered locus">BAD_1615</name>
</gene>
<keyword id="KW-0963">Cytoplasm</keyword>
<keyword id="KW-0489">Methyltransferase</keyword>
<keyword id="KW-1185">Reference proteome</keyword>
<keyword id="KW-0694">RNA-binding</keyword>
<keyword id="KW-0698">rRNA processing</keyword>
<keyword id="KW-0949">S-adenosyl-L-methionine</keyword>
<keyword id="KW-0808">Transferase</keyword>
<comment type="function">
    <text evidence="1">Specifically dimethylates two adjacent adenosines (A1518 and A1519) in the loop of a conserved hairpin near the 3'-end of 16S rRNA in the 30S particle. May play a critical role in biogenesis of 30S subunits.</text>
</comment>
<comment type="catalytic activity">
    <reaction evidence="1">
        <text>adenosine(1518)/adenosine(1519) in 16S rRNA + 4 S-adenosyl-L-methionine = N(6)-dimethyladenosine(1518)/N(6)-dimethyladenosine(1519) in 16S rRNA + 4 S-adenosyl-L-homocysteine + 4 H(+)</text>
        <dbReference type="Rhea" id="RHEA:19609"/>
        <dbReference type="Rhea" id="RHEA-COMP:10232"/>
        <dbReference type="Rhea" id="RHEA-COMP:10233"/>
        <dbReference type="ChEBI" id="CHEBI:15378"/>
        <dbReference type="ChEBI" id="CHEBI:57856"/>
        <dbReference type="ChEBI" id="CHEBI:59789"/>
        <dbReference type="ChEBI" id="CHEBI:74411"/>
        <dbReference type="ChEBI" id="CHEBI:74493"/>
        <dbReference type="EC" id="2.1.1.182"/>
    </reaction>
</comment>
<comment type="subcellular location">
    <subcellularLocation>
        <location evidence="1">Cytoplasm</location>
    </subcellularLocation>
</comment>
<comment type="similarity">
    <text evidence="1">Belongs to the class I-like SAM-binding methyltransferase superfamily. rRNA adenine N(6)-methyltransferase family. RsmA subfamily.</text>
</comment>
<feature type="chain" id="PRO_1000056597" description="Ribosomal RNA small subunit methyltransferase A">
    <location>
        <begin position="1"/>
        <end position="303"/>
    </location>
</feature>
<feature type="binding site" evidence="1">
    <location>
        <position position="37"/>
    </location>
    <ligand>
        <name>S-adenosyl-L-methionine</name>
        <dbReference type="ChEBI" id="CHEBI:59789"/>
    </ligand>
</feature>
<feature type="binding site" evidence="1">
    <location>
        <position position="39"/>
    </location>
    <ligand>
        <name>S-adenosyl-L-methionine</name>
        <dbReference type="ChEBI" id="CHEBI:59789"/>
    </ligand>
</feature>
<feature type="binding site" evidence="1">
    <location>
        <position position="64"/>
    </location>
    <ligand>
        <name>S-adenosyl-L-methionine</name>
        <dbReference type="ChEBI" id="CHEBI:59789"/>
    </ligand>
</feature>
<feature type="binding site" evidence="1">
    <location>
        <position position="85"/>
    </location>
    <ligand>
        <name>S-adenosyl-L-methionine</name>
        <dbReference type="ChEBI" id="CHEBI:59789"/>
    </ligand>
</feature>
<feature type="binding site" evidence="1">
    <location>
        <position position="115"/>
    </location>
    <ligand>
        <name>S-adenosyl-L-methionine</name>
        <dbReference type="ChEBI" id="CHEBI:59789"/>
    </ligand>
</feature>
<feature type="binding site" evidence="1">
    <location>
        <position position="138"/>
    </location>
    <ligand>
        <name>S-adenosyl-L-methionine</name>
        <dbReference type="ChEBI" id="CHEBI:59789"/>
    </ligand>
</feature>
<evidence type="ECO:0000255" key="1">
    <source>
        <dbReference type="HAMAP-Rule" id="MF_00607"/>
    </source>
</evidence>